<proteinExistence type="evidence at transcript level"/>
<feature type="signal peptide" evidence="2">
    <location>
        <begin position="1"/>
        <end position="40"/>
    </location>
</feature>
<feature type="chain" id="PRO_0000023493" description="Pectinesterase/pectinesterase inhibitor U1">
    <location>
        <begin position="41"/>
        <end position="583"/>
    </location>
</feature>
<feature type="region of interest" description="Pectinesterase inhibitor U1">
    <location>
        <begin position="60"/>
        <end position="221"/>
    </location>
</feature>
<feature type="region of interest" description="Pectinesterase U1">
    <location>
        <begin position="272"/>
        <end position="570"/>
    </location>
</feature>
<feature type="active site" description="Proton donor; for pectinesterase activity" evidence="3">
    <location>
        <position position="400"/>
    </location>
</feature>
<feature type="active site" description="Nucleophile; for pectinesterase activity" evidence="3">
    <location>
        <position position="421"/>
    </location>
</feature>
<feature type="binding site" evidence="1">
    <location>
        <position position="347"/>
    </location>
    <ligand>
        <name>substrate</name>
        <note>for pectinesterase activity</note>
    </ligand>
</feature>
<feature type="binding site" evidence="1">
    <location>
        <position position="377"/>
    </location>
    <ligand>
        <name>substrate</name>
        <note>for pectinesterase activity</note>
    </ligand>
</feature>
<feature type="binding site" evidence="1">
    <location>
        <position position="489"/>
    </location>
    <ligand>
        <name>substrate</name>
        <note>for pectinesterase activity</note>
    </ligand>
</feature>
<feature type="binding site" evidence="1">
    <location>
        <position position="491"/>
    </location>
    <ligand>
        <name>substrate</name>
        <note>for pectinesterase activity</note>
    </ligand>
</feature>
<feature type="site" description="Transition state stabilizer" evidence="1">
    <location>
        <position position="399"/>
    </location>
</feature>
<feature type="glycosylation site" description="N-linked (GlcNAc...) asparagine" evidence="2">
    <location>
        <position position="85"/>
    </location>
</feature>
<feature type="glycosylation site" description="N-linked (GlcNAc...) asparagine" evidence="2">
    <location>
        <position position="105"/>
    </location>
</feature>
<feature type="glycosylation site" description="N-linked (GlcNAc...) asparagine" evidence="2">
    <location>
        <position position="224"/>
    </location>
</feature>
<feature type="disulfide bond" evidence="1">
    <location>
        <begin position="414"/>
        <end position="434"/>
    </location>
</feature>
<name>PMEU1_SOLLC</name>
<accession>Q43143</accession>
<evidence type="ECO:0000250" key="1"/>
<evidence type="ECO:0000255" key="2"/>
<evidence type="ECO:0000255" key="3">
    <source>
        <dbReference type="PROSITE-ProRule" id="PRU10040"/>
    </source>
</evidence>
<evidence type="ECO:0000305" key="4"/>
<dbReference type="EC" id="3.1.1.11"/>
<dbReference type="EMBL" id="U49330">
    <property type="protein sequence ID" value="AAD09283.1"/>
    <property type="molecule type" value="mRNA"/>
</dbReference>
<dbReference type="PIR" id="T07848">
    <property type="entry name" value="T07848"/>
</dbReference>
<dbReference type="RefSeq" id="NP_001233857.2">
    <property type="nucleotide sequence ID" value="NM_001246928.2"/>
</dbReference>
<dbReference type="SMR" id="Q43143"/>
<dbReference type="FunCoup" id="Q43143">
    <property type="interactions" value="424"/>
</dbReference>
<dbReference type="STRING" id="4081.Q43143"/>
<dbReference type="GlyCosmos" id="Q43143">
    <property type="glycosylation" value="3 sites, No reported glycans"/>
</dbReference>
<dbReference type="PaxDb" id="4081-Solyc03g123630.2.1"/>
<dbReference type="GeneID" id="544016"/>
<dbReference type="KEGG" id="sly:544016"/>
<dbReference type="eggNOG" id="ENOG502QVK0">
    <property type="taxonomic scope" value="Eukaryota"/>
</dbReference>
<dbReference type="InParanoid" id="Q43143"/>
<dbReference type="OrthoDB" id="2019149at2759"/>
<dbReference type="BRENDA" id="3.1.1.11">
    <property type="organism ID" value="3101"/>
</dbReference>
<dbReference type="UniPathway" id="UPA00545">
    <property type="reaction ID" value="UER00823"/>
</dbReference>
<dbReference type="Proteomes" id="UP000004994">
    <property type="component" value="Unplaced"/>
</dbReference>
<dbReference type="ExpressionAtlas" id="Q43143">
    <property type="expression patterns" value="baseline and differential"/>
</dbReference>
<dbReference type="GO" id="GO:0005576">
    <property type="term" value="C:extracellular region"/>
    <property type="evidence" value="ECO:0007669"/>
    <property type="project" value="UniProtKB-KW"/>
</dbReference>
<dbReference type="GO" id="GO:0030599">
    <property type="term" value="F:pectinesterase activity"/>
    <property type="evidence" value="ECO:0000318"/>
    <property type="project" value="GO_Central"/>
</dbReference>
<dbReference type="GO" id="GO:0046910">
    <property type="term" value="F:pectinesterase inhibitor activity"/>
    <property type="evidence" value="ECO:0000318"/>
    <property type="project" value="GO_Central"/>
</dbReference>
<dbReference type="GO" id="GO:0042545">
    <property type="term" value="P:cell wall modification"/>
    <property type="evidence" value="ECO:0007669"/>
    <property type="project" value="InterPro"/>
</dbReference>
<dbReference type="GO" id="GO:0045490">
    <property type="term" value="P:pectin catabolic process"/>
    <property type="evidence" value="ECO:0007669"/>
    <property type="project" value="UniProtKB-UniPathway"/>
</dbReference>
<dbReference type="CDD" id="cd15798">
    <property type="entry name" value="PMEI-like_3"/>
    <property type="match status" value="1"/>
</dbReference>
<dbReference type="FunFam" id="1.20.140.40:FF:000010">
    <property type="entry name" value="Pectinesterase"/>
    <property type="match status" value="1"/>
</dbReference>
<dbReference type="FunFam" id="2.160.20.10:FF:000001">
    <property type="entry name" value="Pectinesterase"/>
    <property type="match status" value="1"/>
</dbReference>
<dbReference type="Gene3D" id="1.20.140.40">
    <property type="entry name" value="Invertase/pectin methylesterase inhibitor family protein"/>
    <property type="match status" value="1"/>
</dbReference>
<dbReference type="Gene3D" id="2.160.20.10">
    <property type="entry name" value="Single-stranded right-handed beta-helix, Pectin lyase-like"/>
    <property type="match status" value="1"/>
</dbReference>
<dbReference type="InterPro" id="IPR035513">
    <property type="entry name" value="Invertase/methylesterase_inhib"/>
</dbReference>
<dbReference type="InterPro" id="IPR012334">
    <property type="entry name" value="Pectin_lyas_fold"/>
</dbReference>
<dbReference type="InterPro" id="IPR011050">
    <property type="entry name" value="Pectin_lyase_fold/virulence"/>
</dbReference>
<dbReference type="InterPro" id="IPR033131">
    <property type="entry name" value="Pectinesterase_Asp_AS"/>
</dbReference>
<dbReference type="InterPro" id="IPR000070">
    <property type="entry name" value="Pectinesterase_cat"/>
</dbReference>
<dbReference type="InterPro" id="IPR006501">
    <property type="entry name" value="Pectinesterase_inhib_dom"/>
</dbReference>
<dbReference type="InterPro" id="IPR018040">
    <property type="entry name" value="Pectinesterase_Tyr_AS"/>
</dbReference>
<dbReference type="NCBIfam" id="TIGR01614">
    <property type="entry name" value="PME_inhib"/>
    <property type="match status" value="1"/>
</dbReference>
<dbReference type="PANTHER" id="PTHR31707">
    <property type="entry name" value="PECTINESTERASE"/>
    <property type="match status" value="1"/>
</dbReference>
<dbReference type="Pfam" id="PF01095">
    <property type="entry name" value="Pectinesterase"/>
    <property type="match status" value="1"/>
</dbReference>
<dbReference type="Pfam" id="PF04043">
    <property type="entry name" value="PMEI"/>
    <property type="match status" value="1"/>
</dbReference>
<dbReference type="SMART" id="SM00856">
    <property type="entry name" value="PMEI"/>
    <property type="match status" value="1"/>
</dbReference>
<dbReference type="SUPFAM" id="SSF51126">
    <property type="entry name" value="Pectin lyase-like"/>
    <property type="match status" value="1"/>
</dbReference>
<dbReference type="SUPFAM" id="SSF101148">
    <property type="entry name" value="Plant invertase/pectin methylesterase inhibitor"/>
    <property type="match status" value="1"/>
</dbReference>
<dbReference type="PROSITE" id="PS00800">
    <property type="entry name" value="PECTINESTERASE_1"/>
    <property type="match status" value="1"/>
</dbReference>
<dbReference type="PROSITE" id="PS00503">
    <property type="entry name" value="PECTINESTERASE_2"/>
    <property type="match status" value="1"/>
</dbReference>
<comment type="function">
    <text evidence="1">Acts in the modification of cell walls via demethylesterification of cell wall pectin.</text>
</comment>
<comment type="catalytic activity">
    <reaction>
        <text>[(1-&gt;4)-alpha-D-galacturonosyl methyl ester](n) + n H2O = [(1-&gt;4)-alpha-D-galacturonosyl](n) + n methanol + n H(+)</text>
        <dbReference type="Rhea" id="RHEA:22380"/>
        <dbReference type="Rhea" id="RHEA-COMP:14570"/>
        <dbReference type="Rhea" id="RHEA-COMP:14573"/>
        <dbReference type="ChEBI" id="CHEBI:15377"/>
        <dbReference type="ChEBI" id="CHEBI:15378"/>
        <dbReference type="ChEBI" id="CHEBI:17790"/>
        <dbReference type="ChEBI" id="CHEBI:140522"/>
        <dbReference type="ChEBI" id="CHEBI:140523"/>
        <dbReference type="EC" id="3.1.1.11"/>
    </reaction>
</comment>
<comment type="pathway">
    <text>Glycan metabolism; pectin degradation; 2-dehydro-3-deoxy-D-gluconate from pectin: step 1/5.</text>
</comment>
<comment type="subcellular location">
    <subcellularLocation>
        <location evidence="4">Secreted</location>
        <location evidence="4">Cell wall</location>
    </subcellularLocation>
</comment>
<comment type="miscellaneous">
    <text>The PMEI region may act as an autoinhibitory domain and prevent untimely PME activity during transport.</text>
</comment>
<comment type="similarity">
    <text evidence="4">In the N-terminal section; belongs to the PMEI family.</text>
</comment>
<comment type="similarity">
    <text evidence="4">In the C-terminal section; belongs to the pectinesterase family.</text>
</comment>
<keyword id="KW-0063">Aspartyl esterase</keyword>
<keyword id="KW-0134">Cell wall</keyword>
<keyword id="KW-0961">Cell wall biogenesis/degradation</keyword>
<keyword id="KW-1015">Disulfide bond</keyword>
<keyword id="KW-0325">Glycoprotein</keyword>
<keyword id="KW-0378">Hydrolase</keyword>
<keyword id="KW-1185">Reference proteome</keyword>
<keyword id="KW-0964">Secreted</keyword>
<keyword id="KW-0732">Signal</keyword>
<organism>
    <name type="scientific">Solanum lycopersicum</name>
    <name type="common">Tomato</name>
    <name type="synonym">Lycopersicon esculentum</name>
    <dbReference type="NCBI Taxonomy" id="4081"/>
    <lineage>
        <taxon>Eukaryota</taxon>
        <taxon>Viridiplantae</taxon>
        <taxon>Streptophyta</taxon>
        <taxon>Embryophyta</taxon>
        <taxon>Tracheophyta</taxon>
        <taxon>Spermatophyta</taxon>
        <taxon>Magnoliopsida</taxon>
        <taxon>eudicotyledons</taxon>
        <taxon>Gunneridae</taxon>
        <taxon>Pentapetalae</taxon>
        <taxon>asterids</taxon>
        <taxon>lamiids</taxon>
        <taxon>Solanales</taxon>
        <taxon>Solanaceae</taxon>
        <taxon>Solanoideae</taxon>
        <taxon>Solaneae</taxon>
        <taxon>Solanum</taxon>
        <taxon>Solanum subgen. Lycopersicon</taxon>
    </lineage>
</organism>
<sequence length="583" mass="64103">MTRVEDFFSKQIDFCKRKKKIYLAIVASVLLVAAVIGVVAGVKSHSKNSDDHADIMAISSSAHAIVKSACSNTLHPELCYSAIVNVSDFSKKVTSQKDVIELSLNITVKAVRRNYYAVKELIKTRKGLTPREKVALHDCLETMDETLDELHTAVEDLELYPNKKSLKEHVEDLKTLISSAITNQETCLDGFSHDEADKKVRKVLLKGQKHVEKMCSNALAMICNMTDTDIANEMKLSAPANNRKLVEDNGEWPEWLSAGDRRLLQSSTVTPDVVVAADGSGDYKTVSEAVRKAPEKSSKRYVIRIKAGVYRENVDVPKKKTNIMFMGDGKSNTIITASRNVQDGSTTFHSATVVRVAGKVLARDITFQNTAGASKHQAVALCVGSDLSAFYRCDMLAYQDTLYVHSNRQFFVQCLVAGTVDFIFGNGAAVFQDCDIHARRPGSGQKNMVTAQGRTDPNQNTGIVIQKCRIGATSDLRPVQKSFPTYLGRPWKEYSRTVIMQSSITDVIQPAGWHEWNGNFALDTLFYGEYANTGAGAPTSGRVKWKGHKVITSSTEAQAYTPGRFIAGGSWLSSTGFPFSLGL</sequence>
<protein>
    <recommendedName>
        <fullName>Pectinesterase/pectinesterase inhibitor U1</fullName>
    </recommendedName>
    <domain>
        <recommendedName>
            <fullName>Pectinesterase inhibitor U1</fullName>
        </recommendedName>
        <alternativeName>
            <fullName>Pectin methylesterase inhibitor U1</fullName>
        </alternativeName>
    </domain>
    <domain>
        <recommendedName>
            <fullName>Pectinesterase U1</fullName>
            <shortName>PE U1</shortName>
            <ecNumber>3.1.1.11</ecNumber>
        </recommendedName>
        <alternativeName>
            <fullName>Pectin methylesterase U1</fullName>
        </alternativeName>
    </domain>
</protein>
<gene>
    <name type="primary">PMEU1</name>
</gene>
<reference key="1">
    <citation type="online journal article" date="1996" name="Plant Gene Register">
        <title>Cloning and nucleotide sequence of a pectin methylesterase cDNA homologue from tomato leaves.</title>
        <authorList>
            <person name="Gaffe J."/>
            <person name="Tiznado M.E."/>
            <person name="Handa A.K."/>
        </authorList>
        <locator>PGR96-017</locator>
    </citation>
    <scope>NUCLEOTIDE SEQUENCE [MRNA]</scope>
    <source>
        <strain>cv. Rio Grande</strain>
        <tissue>Leaf</tissue>
    </source>
</reference>